<evidence type="ECO:0000250" key="1">
    <source>
        <dbReference type="UniProtKB" id="Q98ST6"/>
    </source>
</evidence>
<evidence type="ECO:0000255" key="2"/>
<evidence type="ECO:0000269" key="3">
    <source>
    </source>
</evidence>
<evidence type="ECO:0000269" key="4">
    <source>
    </source>
</evidence>
<evidence type="ECO:0000269" key="5">
    <source>
    </source>
</evidence>
<evidence type="ECO:0000305" key="6"/>
<evidence type="ECO:0000305" key="7">
    <source>
    </source>
</evidence>
<evidence type="ECO:0000305" key="8">
    <source>
    </source>
</evidence>
<sequence length="258" mass="29065">MIAISAVSSALLFSLLCEASTVVLLNSTDSSPPTNNFTDIEAALKAQLDSADIPKARRKRYISQNDMIAILDYHNQVRGKVFPPAANMEYMVWDENLAKSAEAWAATCIWDHGPSYLLRFLGQNLSVRTGRYRSILQLVKPWYDEVKDYAFPYPQDCNPRCPMRCFGPMCTHYTQMVWATSNRIGCAIHTCQNMNVWGSVWRRAVYLVCNYAPKGNWIGEAPYKVGVPCSSCPPSYGGSCTDNLCFPGVTSNYLYWFK</sequence>
<keyword id="KW-0217">Developmental protein</keyword>
<keyword id="KW-0903">Direct protein sequencing</keyword>
<keyword id="KW-0325">Glycoprotein</keyword>
<keyword id="KW-0646">Protease inhibitor</keyword>
<keyword id="KW-1267">Proteomics identification</keyword>
<keyword id="KW-1185">Reference proteome</keyword>
<keyword id="KW-0964">Secreted</keyword>
<keyword id="KW-0732">Signal</keyword>
<gene>
    <name type="primary">PI15</name>
    <name type="synonym">CRISP8</name>
    <name type="synonym">P25TI</name>
</gene>
<name>PI15_HUMAN</name>
<protein>
    <recommendedName>
        <fullName>Peptidase inhibitor 15</fullName>
        <shortName>PI-15</shortName>
    </recommendedName>
    <alternativeName>
        <fullName>25 kDa trypsin inhibitor</fullName>
        <shortName>p25TI</shortName>
    </alternativeName>
    <alternativeName>
        <fullName>Cysteine-rich secretory protein 8</fullName>
        <shortName>CRISP-8</shortName>
    </alternativeName>
    <alternativeName>
        <fullName>SugarCrisp</fullName>
    </alternativeName>
</protein>
<feature type="signal peptide" evidence="2">
    <location>
        <begin position="1"/>
        <end position="19"/>
    </location>
</feature>
<feature type="propeptide" id="PRO_0000287622" evidence="7">
    <location>
        <begin position="20"/>
        <end position="60"/>
    </location>
</feature>
<feature type="chain" id="PRO_0000287623" description="Peptidase inhibitor 15">
    <location>
        <begin position="61"/>
        <end position="258"/>
    </location>
</feature>
<feature type="domain" description="SCP">
    <location>
        <begin position="71"/>
        <end position="211"/>
    </location>
</feature>
<feature type="glycosylation site" description="N-linked (GlcNAc...) asparagine" evidence="2">
    <location>
        <position position="26"/>
    </location>
</feature>
<feature type="glycosylation site" description="N-linked (GlcNAc...) asparagine" evidence="2">
    <location>
        <position position="36"/>
    </location>
</feature>
<feature type="glycosylation site" description="N-linked (GlcNAc...) asparagine" evidence="2">
    <location>
        <position position="124"/>
    </location>
</feature>
<comment type="function">
    <text evidence="1 4">Serine protease inhibitor which displays weak inhibitory activity against trypsin (PubMed:8882727). May play a role in facial patterning during embryonic development (By similarity).</text>
</comment>
<comment type="subcellular location">
    <subcellularLocation>
        <location evidence="4">Secreted</location>
    </subcellularLocation>
</comment>
<comment type="tissue specificity">
    <text evidence="3 5">Weakly expressed. Expressed at low level in prostate, mammary gland, salivary gland and thyroid gland.</text>
</comment>
<comment type="PTM">
    <text evidence="8">N-glycosylated.</text>
</comment>
<comment type="similarity">
    <text evidence="6">Belongs to the CRISP family.</text>
</comment>
<dbReference type="EMBL" id="D45027">
    <property type="protein sequence ID" value="BAA25066.1"/>
    <property type="molecule type" value="mRNA"/>
</dbReference>
<dbReference type="EMBL" id="CR749657">
    <property type="protein sequence ID" value="CAH18451.2"/>
    <property type="molecule type" value="mRNA"/>
</dbReference>
<dbReference type="EMBL" id="BC074931">
    <property type="protein sequence ID" value="AAH74931.1"/>
    <property type="molecule type" value="mRNA"/>
</dbReference>
<dbReference type="EMBL" id="BC074932">
    <property type="protein sequence ID" value="AAH74932.1"/>
    <property type="molecule type" value="mRNA"/>
</dbReference>
<dbReference type="EMBL" id="BC126290">
    <property type="protein sequence ID" value="AAI26291.1"/>
    <property type="molecule type" value="mRNA"/>
</dbReference>
<dbReference type="EMBL" id="BC126292">
    <property type="protein sequence ID" value="AAI26293.1"/>
    <property type="molecule type" value="mRNA"/>
</dbReference>
<dbReference type="CCDS" id="CCDS6218.1"/>
<dbReference type="RefSeq" id="NP_001311332.1">
    <property type="nucleotide sequence ID" value="NM_001324403.2"/>
</dbReference>
<dbReference type="RefSeq" id="NP_056970.1">
    <property type="nucleotide sequence ID" value="NM_015886.5"/>
</dbReference>
<dbReference type="SMR" id="O43692"/>
<dbReference type="BioGRID" id="119244">
    <property type="interactions" value="92"/>
</dbReference>
<dbReference type="FunCoup" id="O43692">
    <property type="interactions" value="18"/>
</dbReference>
<dbReference type="IntAct" id="O43692">
    <property type="interactions" value="81"/>
</dbReference>
<dbReference type="STRING" id="9606.ENSP00000260113"/>
<dbReference type="GlyCosmos" id="O43692">
    <property type="glycosylation" value="3 sites, No reported glycans"/>
</dbReference>
<dbReference type="GlyGen" id="O43692">
    <property type="glycosylation" value="4 sites, 1 O-linked glycan (1 site)"/>
</dbReference>
<dbReference type="iPTMnet" id="O43692"/>
<dbReference type="PhosphoSitePlus" id="O43692"/>
<dbReference type="BioMuta" id="PI15"/>
<dbReference type="jPOST" id="O43692"/>
<dbReference type="MassIVE" id="O43692"/>
<dbReference type="PaxDb" id="9606-ENSP00000260113"/>
<dbReference type="PeptideAtlas" id="O43692"/>
<dbReference type="ProteomicsDB" id="49119"/>
<dbReference type="Antibodypedia" id="1731">
    <property type="antibodies" value="184 antibodies from 27 providers"/>
</dbReference>
<dbReference type="DNASU" id="51050"/>
<dbReference type="Ensembl" id="ENST00000260113.7">
    <property type="protein sequence ID" value="ENSP00000260113.2"/>
    <property type="gene ID" value="ENSG00000137558.9"/>
</dbReference>
<dbReference type="Ensembl" id="ENST00000523773.1">
    <property type="protein sequence ID" value="ENSP00000428567.1"/>
    <property type="gene ID" value="ENSG00000137558.9"/>
</dbReference>
<dbReference type="Ensembl" id="ENST00000649643.1">
    <property type="protein sequence ID" value="ENSP00000497041.1"/>
    <property type="gene ID" value="ENSG00000137558.9"/>
</dbReference>
<dbReference type="GeneID" id="51050"/>
<dbReference type="KEGG" id="hsa:51050"/>
<dbReference type="MANE-Select" id="ENST00000260113.7">
    <property type="protein sequence ID" value="ENSP00000260113.2"/>
    <property type="RefSeq nucleotide sequence ID" value="NM_015886.5"/>
    <property type="RefSeq protein sequence ID" value="NP_056970.1"/>
</dbReference>
<dbReference type="UCSC" id="uc003yal.3">
    <property type="organism name" value="human"/>
</dbReference>
<dbReference type="AGR" id="HGNC:8946"/>
<dbReference type="CTD" id="51050"/>
<dbReference type="DisGeNET" id="51050"/>
<dbReference type="GeneCards" id="PI15"/>
<dbReference type="HGNC" id="HGNC:8946">
    <property type="gene designation" value="PI15"/>
</dbReference>
<dbReference type="HPA" id="ENSG00000137558">
    <property type="expression patterns" value="Tissue enhanced (lymphoid tissue, prostate, smooth muscle)"/>
</dbReference>
<dbReference type="MIM" id="607076">
    <property type="type" value="gene"/>
</dbReference>
<dbReference type="neXtProt" id="NX_O43692"/>
<dbReference type="OpenTargets" id="ENSG00000137558"/>
<dbReference type="PharmGKB" id="PA33282"/>
<dbReference type="VEuPathDB" id="HostDB:ENSG00000137558"/>
<dbReference type="eggNOG" id="KOG3017">
    <property type="taxonomic scope" value="Eukaryota"/>
</dbReference>
<dbReference type="GeneTree" id="ENSGT00940000158635"/>
<dbReference type="HOGENOM" id="CLU_035730_2_2_1"/>
<dbReference type="InParanoid" id="O43692"/>
<dbReference type="OMA" id="IWEHGPR"/>
<dbReference type="OrthoDB" id="414826at2759"/>
<dbReference type="PAN-GO" id="O43692">
    <property type="GO annotations" value="1 GO annotation based on evolutionary models"/>
</dbReference>
<dbReference type="PhylomeDB" id="O43692"/>
<dbReference type="TreeFam" id="TF316148"/>
<dbReference type="PathwayCommons" id="O43692"/>
<dbReference type="BioGRID-ORCS" id="51050">
    <property type="hits" value="9 hits in 1146 CRISPR screens"/>
</dbReference>
<dbReference type="ChiTaRS" id="PI15">
    <property type="organism name" value="human"/>
</dbReference>
<dbReference type="GenomeRNAi" id="51050"/>
<dbReference type="Pharos" id="O43692">
    <property type="development level" value="Tbio"/>
</dbReference>
<dbReference type="PRO" id="PR:O43692"/>
<dbReference type="Proteomes" id="UP000005640">
    <property type="component" value="Chromosome 8"/>
</dbReference>
<dbReference type="RNAct" id="O43692">
    <property type="molecule type" value="protein"/>
</dbReference>
<dbReference type="Bgee" id="ENSG00000137558">
    <property type="expression patterns" value="Expressed in cauda epididymis and 130 other cell types or tissues"/>
</dbReference>
<dbReference type="GO" id="GO:0070062">
    <property type="term" value="C:extracellular exosome"/>
    <property type="evidence" value="ECO:0007005"/>
    <property type="project" value="UniProtKB"/>
</dbReference>
<dbReference type="GO" id="GO:0005615">
    <property type="term" value="C:extracellular space"/>
    <property type="evidence" value="ECO:0000318"/>
    <property type="project" value="GO_Central"/>
</dbReference>
<dbReference type="GO" id="GO:0030414">
    <property type="term" value="F:peptidase inhibitor activity"/>
    <property type="evidence" value="ECO:0007669"/>
    <property type="project" value="UniProtKB-KW"/>
</dbReference>
<dbReference type="CDD" id="cd18814">
    <property type="entry name" value="CAP_PI15"/>
    <property type="match status" value="1"/>
</dbReference>
<dbReference type="FunFam" id="3.40.33.10:FF:000003">
    <property type="entry name" value="Peptidase inhibitor 15"/>
    <property type="match status" value="1"/>
</dbReference>
<dbReference type="Gene3D" id="3.40.33.10">
    <property type="entry name" value="CAP"/>
    <property type="match status" value="1"/>
</dbReference>
<dbReference type="InterPro" id="IPR018244">
    <property type="entry name" value="Allrgn_V5/Tpx1_CS"/>
</dbReference>
<dbReference type="InterPro" id="IPR014044">
    <property type="entry name" value="CAP_dom"/>
</dbReference>
<dbReference type="InterPro" id="IPR035940">
    <property type="entry name" value="CAP_sf"/>
</dbReference>
<dbReference type="InterPro" id="IPR001283">
    <property type="entry name" value="CRISP-related"/>
</dbReference>
<dbReference type="InterPro" id="IPR047832">
    <property type="entry name" value="PI15_CAP"/>
</dbReference>
<dbReference type="PANTHER" id="PTHR10334">
    <property type="entry name" value="CYSTEINE-RICH SECRETORY PROTEIN-RELATED"/>
    <property type="match status" value="1"/>
</dbReference>
<dbReference type="Pfam" id="PF00188">
    <property type="entry name" value="CAP"/>
    <property type="match status" value="1"/>
</dbReference>
<dbReference type="PRINTS" id="PR00837">
    <property type="entry name" value="V5TPXLIKE"/>
</dbReference>
<dbReference type="SMART" id="SM00198">
    <property type="entry name" value="SCP"/>
    <property type="match status" value="1"/>
</dbReference>
<dbReference type="SUPFAM" id="SSF55797">
    <property type="entry name" value="PR-1-like"/>
    <property type="match status" value="1"/>
</dbReference>
<dbReference type="PROSITE" id="PS01010">
    <property type="entry name" value="CRISP_2"/>
    <property type="match status" value="1"/>
</dbReference>
<reference key="1">
    <citation type="journal article" date="1998" name="Biochim. Biophys. Acta">
        <title>cDNA cloning of a novel trypsin inhibitor with similarity to pathogenesis-related proteins, and its frequent expression in human brain cancer cells.</title>
        <authorList>
            <person name="Yamakawa T."/>
            <person name="Miyata S."/>
            <person name="Ogawa N."/>
            <person name="Koshikawa N."/>
            <person name="Yasumitsu H."/>
            <person name="Kanamori T."/>
            <person name="Miyazaki K."/>
        </authorList>
    </citation>
    <scope>NUCLEOTIDE SEQUENCE [MRNA]</scope>
    <scope>TISSUE SPECIFICITY</scope>
    <scope>GLYCOSYLATION</scope>
</reference>
<reference key="2">
    <citation type="journal article" date="2007" name="BMC Genomics">
        <title>The full-ORF clone resource of the German cDNA consortium.</title>
        <authorList>
            <person name="Bechtel S."/>
            <person name="Rosenfelder H."/>
            <person name="Duda A."/>
            <person name="Schmidt C.P."/>
            <person name="Ernst U."/>
            <person name="Wellenreuther R."/>
            <person name="Mehrle A."/>
            <person name="Schuster C."/>
            <person name="Bahr A."/>
            <person name="Bloecker H."/>
            <person name="Heubner D."/>
            <person name="Hoerlein A."/>
            <person name="Michel G."/>
            <person name="Wedler H."/>
            <person name="Koehrer K."/>
            <person name="Ottenwaelder B."/>
            <person name="Poustka A."/>
            <person name="Wiemann S."/>
            <person name="Schupp I."/>
        </authorList>
    </citation>
    <scope>NUCLEOTIDE SEQUENCE [LARGE SCALE MRNA]</scope>
    <source>
        <tissue>Endometrial adenocarcinoma</tissue>
    </source>
</reference>
<reference key="3">
    <citation type="journal article" date="2004" name="Genome Res.">
        <title>The status, quality, and expansion of the NIH full-length cDNA project: the Mammalian Gene Collection (MGC).</title>
        <authorList>
            <consortium name="The MGC Project Team"/>
        </authorList>
    </citation>
    <scope>NUCLEOTIDE SEQUENCE [LARGE SCALE MRNA]</scope>
    <source>
        <tissue>Brain</tissue>
    </source>
</reference>
<reference key="4">
    <citation type="journal article" date="1996" name="J. Biochem.">
        <title>Purification and identification of a novel and four known serine proteinase inhibitors secreted by human glioblastoma cells.</title>
        <authorList>
            <person name="Koshikawa N."/>
            <person name="Nakamura T."/>
            <person name="Tsuchiya N."/>
            <person name="Isaji M."/>
            <person name="Yasumitsu H."/>
            <person name="Umeda M."/>
            <person name="Miyazaki K."/>
        </authorList>
    </citation>
    <scope>PROTEIN SEQUENCE OF 61-85</scope>
    <scope>FUNCTION</scope>
    <scope>SUBCELLULAR LOCATION</scope>
</reference>
<reference key="5">
    <citation type="journal article" date="2001" name="Mech. Dev.">
        <title>Cloning and expression of a novel cysteine-rich secreted protein family member expressed in thyroid and pancreatic mesoderm within the chicken embryo.</title>
        <authorList>
            <person name="Smith D.M."/>
            <person name="Collins-Racie L.A."/>
            <person name="Marigo V.A."/>
            <person name="Roberts D.J."/>
            <person name="Davis N.M."/>
            <person name="Hartmann C."/>
            <person name="Schweitzer R."/>
            <person name="LaVallie E.R."/>
            <person name="Gamer L."/>
            <person name="McCoy J."/>
            <person name="Tabin C.J."/>
        </authorList>
    </citation>
    <scope>TISSUE SPECIFICITY</scope>
</reference>
<accession>O43692</accession>
<accession>Q68CY1</accession>
<organism>
    <name type="scientific">Homo sapiens</name>
    <name type="common">Human</name>
    <dbReference type="NCBI Taxonomy" id="9606"/>
    <lineage>
        <taxon>Eukaryota</taxon>
        <taxon>Metazoa</taxon>
        <taxon>Chordata</taxon>
        <taxon>Craniata</taxon>
        <taxon>Vertebrata</taxon>
        <taxon>Euteleostomi</taxon>
        <taxon>Mammalia</taxon>
        <taxon>Eutheria</taxon>
        <taxon>Euarchontoglires</taxon>
        <taxon>Primates</taxon>
        <taxon>Haplorrhini</taxon>
        <taxon>Catarrhini</taxon>
        <taxon>Hominidae</taxon>
        <taxon>Homo</taxon>
    </lineage>
</organism>
<proteinExistence type="evidence at protein level"/>